<sequence length="225" mass="25628">MSVILPESHPEHPFNLIPELCRRFYDLGWATGTGGGISIKMGDNYYVAPSGVQKERIKSNEIFVLNSSQDIVEKPRTDKQLKMSECTPLFFNAYRMRNAGACLHTHSVKCVLISLLCDREFRISHIEMLKGISNNETKKALGFRDTLIVPIIENTDFEKDLTASMAECMEKYPESCAVLVRRHGMYVWSDTWQKAKGAVECIDYLMGLAIQMKQLGLEWEPKDVK</sequence>
<comment type="function">
    <text evidence="1">Catalyzes the dehydration of methylthioribulose-1-phosphate (MTRu-1-P) into 2,3-diketo-5-methylthiopentyl-1-phosphate (DK-MTP-1-P).</text>
</comment>
<comment type="catalytic activity">
    <reaction evidence="1">
        <text>5-(methylsulfanyl)-D-ribulose 1-phosphate = 5-methylsulfanyl-2,3-dioxopentyl phosphate + H2O</text>
        <dbReference type="Rhea" id="RHEA:15549"/>
        <dbReference type="ChEBI" id="CHEBI:15377"/>
        <dbReference type="ChEBI" id="CHEBI:58548"/>
        <dbReference type="ChEBI" id="CHEBI:58828"/>
        <dbReference type="EC" id="4.2.1.109"/>
    </reaction>
</comment>
<comment type="cofactor">
    <cofactor evidence="1">
        <name>Zn(2+)</name>
        <dbReference type="ChEBI" id="CHEBI:29105"/>
    </cofactor>
    <text evidence="1">Binds 1 zinc ion per subunit.</text>
</comment>
<comment type="pathway">
    <text evidence="1">Amino-acid biosynthesis; L-methionine biosynthesis via salvage pathway; L-methionine from S-methyl-5-thio-alpha-D-ribose 1-phosphate: step 2/6.</text>
</comment>
<comment type="subcellular location">
    <subcellularLocation>
        <location evidence="1">Cytoplasm</location>
    </subcellularLocation>
</comment>
<comment type="similarity">
    <text evidence="1">Belongs to the aldolase class II family. MtnB subfamily.</text>
</comment>
<gene>
    <name type="ORF">LbrM28_V2.2010</name>
    <name type="ORF">LbrM_28_2010</name>
</gene>
<feature type="chain" id="PRO_0000393796" description="Probable methylthioribulose-1-phosphate dehydratase">
    <location>
        <begin position="1"/>
        <end position="225"/>
    </location>
</feature>
<feature type="active site" description="Proton donor/acceptor" evidence="1">
    <location>
        <position position="127"/>
    </location>
</feature>
<feature type="binding site" evidence="1">
    <location>
        <position position="86"/>
    </location>
    <ligand>
        <name>substrate</name>
    </ligand>
</feature>
<feature type="binding site" evidence="1">
    <location>
        <position position="104"/>
    </location>
    <ligand>
        <name>Zn(2+)</name>
        <dbReference type="ChEBI" id="CHEBI:29105"/>
    </ligand>
</feature>
<feature type="binding site" evidence="1">
    <location>
        <position position="106"/>
    </location>
    <ligand>
        <name>Zn(2+)</name>
        <dbReference type="ChEBI" id="CHEBI:29105"/>
    </ligand>
</feature>
<feature type="binding site" evidence="1">
    <location>
        <position position="183"/>
    </location>
    <ligand>
        <name>Zn(2+)</name>
        <dbReference type="ChEBI" id="CHEBI:29105"/>
    </ligand>
</feature>
<proteinExistence type="inferred from homology"/>
<organism>
    <name type="scientific">Leishmania braziliensis</name>
    <dbReference type="NCBI Taxonomy" id="5660"/>
    <lineage>
        <taxon>Eukaryota</taxon>
        <taxon>Discoba</taxon>
        <taxon>Euglenozoa</taxon>
        <taxon>Kinetoplastea</taxon>
        <taxon>Metakinetoplastina</taxon>
        <taxon>Trypanosomatida</taxon>
        <taxon>Trypanosomatidae</taxon>
        <taxon>Leishmaniinae</taxon>
        <taxon>Leishmania</taxon>
        <taxon>Leishmania braziliensis species complex</taxon>
    </lineage>
</organism>
<accession>A4HGN7</accession>
<name>MTNB_LEIBR</name>
<evidence type="ECO:0000255" key="1">
    <source>
        <dbReference type="HAMAP-Rule" id="MF_03116"/>
    </source>
</evidence>
<keyword id="KW-0028">Amino-acid biosynthesis</keyword>
<keyword id="KW-0963">Cytoplasm</keyword>
<keyword id="KW-0456">Lyase</keyword>
<keyword id="KW-0479">Metal-binding</keyword>
<keyword id="KW-0486">Methionine biosynthesis</keyword>
<keyword id="KW-1185">Reference proteome</keyword>
<keyword id="KW-0862">Zinc</keyword>
<dbReference type="EC" id="4.2.1.109" evidence="1"/>
<dbReference type="EMBL" id="FR799003">
    <property type="protein sequence ID" value="CAM39731.1"/>
    <property type="molecule type" value="Genomic_DNA"/>
</dbReference>
<dbReference type="RefSeq" id="XP_001566231.2">
    <property type="nucleotide sequence ID" value="XM_001566181.2"/>
</dbReference>
<dbReference type="SMR" id="A4HGN7"/>
<dbReference type="FunCoup" id="A4HGN7">
    <property type="interactions" value="171"/>
</dbReference>
<dbReference type="STRING" id="5660.A4HGN7"/>
<dbReference type="GeneID" id="5417107"/>
<dbReference type="KEGG" id="lbz:LBRM_28_2010"/>
<dbReference type="VEuPathDB" id="TriTrypDB:LbrM.28.2010"/>
<dbReference type="InParanoid" id="A4HGN7"/>
<dbReference type="OMA" id="WFPGTSG"/>
<dbReference type="UniPathway" id="UPA00904">
    <property type="reaction ID" value="UER00875"/>
</dbReference>
<dbReference type="Proteomes" id="UP000007258">
    <property type="component" value="Chromosome 28"/>
</dbReference>
<dbReference type="GO" id="GO:0005737">
    <property type="term" value="C:cytoplasm"/>
    <property type="evidence" value="ECO:0007669"/>
    <property type="project" value="UniProtKB-SubCell"/>
</dbReference>
<dbReference type="GO" id="GO:0046570">
    <property type="term" value="F:methylthioribulose 1-phosphate dehydratase activity"/>
    <property type="evidence" value="ECO:0007669"/>
    <property type="project" value="UniProtKB-UniRule"/>
</dbReference>
<dbReference type="GO" id="GO:0008270">
    <property type="term" value="F:zinc ion binding"/>
    <property type="evidence" value="ECO:0007669"/>
    <property type="project" value="UniProtKB-UniRule"/>
</dbReference>
<dbReference type="GO" id="GO:0019509">
    <property type="term" value="P:L-methionine salvage from methylthioadenosine"/>
    <property type="evidence" value="ECO:0007669"/>
    <property type="project" value="UniProtKB-UniRule"/>
</dbReference>
<dbReference type="FunFam" id="3.40.225.10:FF:000003">
    <property type="entry name" value="Methylthioribulose-1-phosphate dehydratase"/>
    <property type="match status" value="1"/>
</dbReference>
<dbReference type="Gene3D" id="3.40.225.10">
    <property type="entry name" value="Class II aldolase/adducin N-terminal domain"/>
    <property type="match status" value="1"/>
</dbReference>
<dbReference type="HAMAP" id="MF_03116">
    <property type="entry name" value="Salvage_MtnB_euk"/>
    <property type="match status" value="1"/>
</dbReference>
<dbReference type="InterPro" id="IPR001303">
    <property type="entry name" value="Aldolase_II/adducin_N"/>
</dbReference>
<dbReference type="InterPro" id="IPR036409">
    <property type="entry name" value="Aldolase_II/adducin_N_sf"/>
</dbReference>
<dbReference type="InterPro" id="IPR017714">
    <property type="entry name" value="MethylthioRu-1-P_deHdtase_MtnB"/>
</dbReference>
<dbReference type="InterPro" id="IPR027514">
    <property type="entry name" value="Salvage_MtnB_euk"/>
</dbReference>
<dbReference type="NCBIfam" id="TIGR03328">
    <property type="entry name" value="salvage_mtnB"/>
    <property type="match status" value="1"/>
</dbReference>
<dbReference type="PANTHER" id="PTHR10640">
    <property type="entry name" value="METHYLTHIORIBULOSE-1-PHOSPHATE DEHYDRATASE"/>
    <property type="match status" value="1"/>
</dbReference>
<dbReference type="PANTHER" id="PTHR10640:SF7">
    <property type="entry name" value="METHYLTHIORIBULOSE-1-PHOSPHATE DEHYDRATASE"/>
    <property type="match status" value="1"/>
</dbReference>
<dbReference type="Pfam" id="PF00596">
    <property type="entry name" value="Aldolase_II"/>
    <property type="match status" value="1"/>
</dbReference>
<dbReference type="SMART" id="SM01007">
    <property type="entry name" value="Aldolase_II"/>
    <property type="match status" value="1"/>
</dbReference>
<dbReference type="SUPFAM" id="SSF53639">
    <property type="entry name" value="AraD/HMP-PK domain-like"/>
    <property type="match status" value="1"/>
</dbReference>
<protein>
    <recommendedName>
        <fullName evidence="1">Probable methylthioribulose-1-phosphate dehydratase</fullName>
        <shortName evidence="1">MTRu-1-P dehydratase</shortName>
        <ecNumber evidence="1">4.2.1.109</ecNumber>
    </recommendedName>
</protein>
<reference key="1">
    <citation type="journal article" date="2007" name="Nat. Genet.">
        <title>Comparative genomic analysis of three Leishmania species that cause diverse human disease.</title>
        <authorList>
            <person name="Peacock C.S."/>
            <person name="Seeger K."/>
            <person name="Harris D."/>
            <person name="Murphy L."/>
            <person name="Ruiz J.C."/>
            <person name="Quail M.A."/>
            <person name="Peters N."/>
            <person name="Adlem E."/>
            <person name="Tivey A."/>
            <person name="Aslett M."/>
            <person name="Kerhornou A."/>
            <person name="Ivens A."/>
            <person name="Fraser A."/>
            <person name="Rajandream M.-A."/>
            <person name="Carver T."/>
            <person name="Norbertczak H."/>
            <person name="Chillingworth T."/>
            <person name="Hance Z."/>
            <person name="Jagels K."/>
            <person name="Moule S."/>
            <person name="Ormond D."/>
            <person name="Rutter S."/>
            <person name="Sqaures R."/>
            <person name="Whitehead S."/>
            <person name="Rabbinowitsch E."/>
            <person name="Arrowsmith C."/>
            <person name="White B."/>
            <person name="Thurston S."/>
            <person name="Bringaud F."/>
            <person name="Baldauf S.L."/>
            <person name="Faulconbridge A."/>
            <person name="Jeffares D."/>
            <person name="Depledge D.P."/>
            <person name="Oyola S.O."/>
            <person name="Hilley J.D."/>
            <person name="Brito L.O."/>
            <person name="Tosi L.R.O."/>
            <person name="Barrell B."/>
            <person name="Cruz A.K."/>
            <person name="Mottram J.C."/>
            <person name="Smith D.F."/>
            <person name="Berriman M."/>
        </authorList>
    </citation>
    <scope>NUCLEOTIDE SEQUENCE [LARGE SCALE GENOMIC DNA]</scope>
    <source>
        <strain>MHOM/BR/75/M2904</strain>
    </source>
</reference>